<dbReference type="EMBL" id="AE000520">
    <property type="protein sequence ID" value="AAC65900.1"/>
    <property type="molecule type" value="Genomic_DNA"/>
</dbReference>
<dbReference type="PIR" id="A71263">
    <property type="entry name" value="A71263"/>
</dbReference>
<dbReference type="RefSeq" id="WP_010882384.1">
    <property type="nucleotide sequence ID" value="NC_021490.2"/>
</dbReference>
<dbReference type="IntAct" id="O83911">
    <property type="interactions" value="12"/>
</dbReference>
<dbReference type="STRING" id="243276.TP_0941"/>
<dbReference type="EnsemblBacteria" id="AAC65900">
    <property type="protein sequence ID" value="AAC65900"/>
    <property type="gene ID" value="TP_0941"/>
</dbReference>
<dbReference type="KEGG" id="tpa:TP_0941"/>
<dbReference type="KEGG" id="tpw:TPANIC_0941"/>
<dbReference type="eggNOG" id="ENOG5031CDJ">
    <property type="taxonomic scope" value="Bacteria"/>
</dbReference>
<dbReference type="HOGENOM" id="CLU_1539354_0_0_12"/>
<dbReference type="OrthoDB" id="362040at2"/>
<dbReference type="Proteomes" id="UP000000811">
    <property type="component" value="Chromosome"/>
</dbReference>
<feature type="chain" id="PRO_0000202359" description="Uncharacterized protein TP_0941">
    <location>
        <begin position="1"/>
        <end position="172"/>
    </location>
</feature>
<organism>
    <name type="scientific">Treponema pallidum (strain Nichols)</name>
    <dbReference type="NCBI Taxonomy" id="243276"/>
    <lineage>
        <taxon>Bacteria</taxon>
        <taxon>Pseudomonadati</taxon>
        <taxon>Spirochaetota</taxon>
        <taxon>Spirochaetia</taxon>
        <taxon>Spirochaetales</taxon>
        <taxon>Treponemataceae</taxon>
        <taxon>Treponema</taxon>
    </lineage>
</organism>
<sequence>MEPAVILRPLLEKGELKQSVERAQRARYVLYEVQDQGLNFVTASVLADVSAVEKMGLIRRTGKLFSDQEYCDLLNQKVFTVHPDMRGSLKEQGVAFASVEARAYGHWYGIFEVAFPWLPLSVFEDFVLYLRDTKSLSLDEQTAAAVKESFLACRRYSERELDVLFERVLSGE</sequence>
<accession>O83911</accession>
<protein>
    <recommendedName>
        <fullName>Uncharacterized protein TP_0941</fullName>
    </recommendedName>
</protein>
<keyword id="KW-1185">Reference proteome</keyword>
<name>Y941_TREPA</name>
<reference key="1">
    <citation type="journal article" date="1998" name="Science">
        <title>Complete genome sequence of Treponema pallidum, the syphilis spirochete.</title>
        <authorList>
            <person name="Fraser C.M."/>
            <person name="Norris S.J."/>
            <person name="Weinstock G.M."/>
            <person name="White O."/>
            <person name="Sutton G.G."/>
            <person name="Dodson R.J."/>
            <person name="Gwinn M.L."/>
            <person name="Hickey E.K."/>
            <person name="Clayton R.A."/>
            <person name="Ketchum K.A."/>
            <person name="Sodergren E."/>
            <person name="Hardham J.M."/>
            <person name="McLeod M.P."/>
            <person name="Salzberg S.L."/>
            <person name="Peterson J.D."/>
            <person name="Khalak H.G."/>
            <person name="Richardson D.L."/>
            <person name="Howell J.K."/>
            <person name="Chidambaram M."/>
            <person name="Utterback T.R."/>
            <person name="McDonald L.A."/>
            <person name="Artiach P."/>
            <person name="Bowman C."/>
            <person name="Cotton M.D."/>
            <person name="Fujii C."/>
            <person name="Garland S.A."/>
            <person name="Hatch B."/>
            <person name="Horst K."/>
            <person name="Roberts K.M."/>
            <person name="Sandusky M."/>
            <person name="Weidman J.F."/>
            <person name="Smith H.O."/>
            <person name="Venter J.C."/>
        </authorList>
    </citation>
    <scope>NUCLEOTIDE SEQUENCE [LARGE SCALE GENOMIC DNA]</scope>
    <source>
        <strain>Nichols</strain>
    </source>
</reference>
<proteinExistence type="predicted"/>
<gene>
    <name type="ordered locus">TP_0941</name>
</gene>